<gene>
    <name evidence="1" type="primary">clpP4</name>
    <name type="ordered locus">PMT9312_1749</name>
    <name type="ordered locus">PMT9312_1748</name>
</gene>
<comment type="function">
    <text evidence="1">Cleaves peptides in various proteins in a process that requires ATP hydrolysis. Has a chymotrypsin-like activity. Plays a major role in the degradation of misfolded proteins.</text>
</comment>
<comment type="catalytic activity">
    <reaction evidence="1">
        <text>Hydrolysis of proteins to small peptides in the presence of ATP and magnesium. alpha-casein is the usual test substrate. In the absence of ATP, only oligopeptides shorter than five residues are hydrolyzed (such as succinyl-Leu-Tyr-|-NHMec, and Leu-Tyr-Leu-|-Tyr-Trp, in which cleavage of the -Tyr-|-Leu- and -Tyr-|-Trp bonds also occurs).</text>
        <dbReference type="EC" id="3.4.21.92"/>
    </reaction>
</comment>
<comment type="subunit">
    <text evidence="1">Fourteen ClpP subunits assemble into 2 heptameric rings which stack back to back to give a disk-like structure with a central cavity, resembling the structure of eukaryotic proteasomes.</text>
</comment>
<comment type="subcellular location">
    <subcellularLocation>
        <location evidence="1">Cytoplasm</location>
    </subcellularLocation>
</comment>
<comment type="similarity">
    <text evidence="1">Belongs to the peptidase S14 family.</text>
</comment>
<feature type="chain" id="PRO_0000236400" description="ATP-dependent Clp protease proteolytic subunit 4">
    <location>
        <begin position="1"/>
        <end position="219"/>
    </location>
</feature>
<feature type="active site" description="Nucleophile" evidence="1">
    <location>
        <position position="125"/>
    </location>
</feature>
<feature type="active site" evidence="1">
    <location>
        <position position="150"/>
    </location>
</feature>
<evidence type="ECO:0000255" key="1">
    <source>
        <dbReference type="HAMAP-Rule" id="MF_00444"/>
    </source>
</evidence>
<organism>
    <name type="scientific">Prochlorococcus marinus (strain MIT 9312)</name>
    <dbReference type="NCBI Taxonomy" id="74546"/>
    <lineage>
        <taxon>Bacteria</taxon>
        <taxon>Bacillati</taxon>
        <taxon>Cyanobacteriota</taxon>
        <taxon>Cyanophyceae</taxon>
        <taxon>Synechococcales</taxon>
        <taxon>Prochlorococcaceae</taxon>
        <taxon>Prochlorococcus</taxon>
    </lineage>
</organism>
<dbReference type="EC" id="3.4.21.92" evidence="1"/>
<dbReference type="EMBL" id="CP000111">
    <property type="protein sequence ID" value="ABB50809.1"/>
    <property type="molecule type" value="Genomic_DNA"/>
</dbReference>
<dbReference type="SMR" id="Q317Y6"/>
<dbReference type="STRING" id="74546.PMT9312_1748"/>
<dbReference type="MEROPS" id="S14.001"/>
<dbReference type="KEGG" id="pmi:PMT9312_1748"/>
<dbReference type="eggNOG" id="COG0740">
    <property type="taxonomic scope" value="Bacteria"/>
</dbReference>
<dbReference type="HOGENOM" id="CLU_058707_3_2_3"/>
<dbReference type="Proteomes" id="UP000002715">
    <property type="component" value="Chromosome"/>
</dbReference>
<dbReference type="GO" id="GO:0005737">
    <property type="term" value="C:cytoplasm"/>
    <property type="evidence" value="ECO:0007669"/>
    <property type="project" value="UniProtKB-SubCell"/>
</dbReference>
<dbReference type="GO" id="GO:0009368">
    <property type="term" value="C:endopeptidase Clp complex"/>
    <property type="evidence" value="ECO:0007669"/>
    <property type="project" value="TreeGrafter"/>
</dbReference>
<dbReference type="GO" id="GO:0004176">
    <property type="term" value="F:ATP-dependent peptidase activity"/>
    <property type="evidence" value="ECO:0007669"/>
    <property type="project" value="InterPro"/>
</dbReference>
<dbReference type="GO" id="GO:0051117">
    <property type="term" value="F:ATPase binding"/>
    <property type="evidence" value="ECO:0007669"/>
    <property type="project" value="TreeGrafter"/>
</dbReference>
<dbReference type="GO" id="GO:0004252">
    <property type="term" value="F:serine-type endopeptidase activity"/>
    <property type="evidence" value="ECO:0007669"/>
    <property type="project" value="UniProtKB-UniRule"/>
</dbReference>
<dbReference type="GO" id="GO:0006515">
    <property type="term" value="P:protein quality control for misfolded or incompletely synthesized proteins"/>
    <property type="evidence" value="ECO:0007669"/>
    <property type="project" value="TreeGrafter"/>
</dbReference>
<dbReference type="CDD" id="cd07017">
    <property type="entry name" value="S14_ClpP_2"/>
    <property type="match status" value="1"/>
</dbReference>
<dbReference type="FunFam" id="3.90.226.10:FF:000001">
    <property type="entry name" value="ATP-dependent Clp protease proteolytic subunit"/>
    <property type="match status" value="1"/>
</dbReference>
<dbReference type="Gene3D" id="3.90.226.10">
    <property type="entry name" value="2-enoyl-CoA Hydratase, Chain A, domain 1"/>
    <property type="match status" value="1"/>
</dbReference>
<dbReference type="HAMAP" id="MF_00444">
    <property type="entry name" value="ClpP"/>
    <property type="match status" value="1"/>
</dbReference>
<dbReference type="InterPro" id="IPR001907">
    <property type="entry name" value="ClpP"/>
</dbReference>
<dbReference type="InterPro" id="IPR029045">
    <property type="entry name" value="ClpP/crotonase-like_dom_sf"/>
</dbReference>
<dbReference type="InterPro" id="IPR023562">
    <property type="entry name" value="ClpP/TepA"/>
</dbReference>
<dbReference type="InterPro" id="IPR033135">
    <property type="entry name" value="ClpP_His_AS"/>
</dbReference>
<dbReference type="InterPro" id="IPR018215">
    <property type="entry name" value="ClpP_Ser_AS"/>
</dbReference>
<dbReference type="NCBIfam" id="TIGR00493">
    <property type="entry name" value="clpP"/>
    <property type="match status" value="1"/>
</dbReference>
<dbReference type="NCBIfam" id="NF001368">
    <property type="entry name" value="PRK00277.1"/>
    <property type="match status" value="1"/>
</dbReference>
<dbReference type="NCBIfam" id="NF009205">
    <property type="entry name" value="PRK12553.1"/>
    <property type="match status" value="1"/>
</dbReference>
<dbReference type="PANTHER" id="PTHR10381">
    <property type="entry name" value="ATP-DEPENDENT CLP PROTEASE PROTEOLYTIC SUBUNIT"/>
    <property type="match status" value="1"/>
</dbReference>
<dbReference type="PANTHER" id="PTHR10381:SF70">
    <property type="entry name" value="ATP-DEPENDENT CLP PROTEASE PROTEOLYTIC SUBUNIT"/>
    <property type="match status" value="1"/>
</dbReference>
<dbReference type="Pfam" id="PF00574">
    <property type="entry name" value="CLP_protease"/>
    <property type="match status" value="1"/>
</dbReference>
<dbReference type="PRINTS" id="PR00127">
    <property type="entry name" value="CLPPROTEASEP"/>
</dbReference>
<dbReference type="SUPFAM" id="SSF52096">
    <property type="entry name" value="ClpP/crotonase"/>
    <property type="match status" value="1"/>
</dbReference>
<dbReference type="PROSITE" id="PS00382">
    <property type="entry name" value="CLP_PROTEASE_HIS"/>
    <property type="match status" value="1"/>
</dbReference>
<dbReference type="PROSITE" id="PS00381">
    <property type="entry name" value="CLP_PROTEASE_SER"/>
    <property type="match status" value="1"/>
</dbReference>
<accession>Q317Y6</accession>
<reference key="1">
    <citation type="journal article" date="2006" name="Science">
        <title>Genomic islands and the ecology and evolution of Prochlorococcus.</title>
        <authorList>
            <person name="Coleman M.L."/>
            <person name="Sullivan M.B."/>
            <person name="Martiny A.C."/>
            <person name="Steglich C."/>
            <person name="Barry K."/>
            <person name="Delong E.F."/>
            <person name="Chisholm S.W."/>
        </authorList>
    </citation>
    <scope>NUCLEOTIDE SEQUENCE [LARGE SCALE GENOMIC DNA]</scope>
    <source>
        <strain>MIT 9312</strain>
    </source>
</reference>
<name>CLPP4_PROM9</name>
<keyword id="KW-0963">Cytoplasm</keyword>
<keyword id="KW-0378">Hydrolase</keyword>
<keyword id="KW-0645">Protease</keyword>
<keyword id="KW-0720">Serine protease</keyword>
<proteinExistence type="inferred from homology"/>
<protein>
    <recommendedName>
        <fullName evidence="1">ATP-dependent Clp protease proteolytic subunit 4</fullName>
        <ecNumber evidence="1">3.4.21.92</ecNumber>
    </recommendedName>
    <alternativeName>
        <fullName evidence="1">Endopeptidase Clp 4</fullName>
    </alternativeName>
</protein>
<sequence>MENYFVNSEKKHLIQSSISSYESIHKTIGAVPTVIEQSGRGERAFDIYSRLLRERIIFLGSGINDQVSDSLVAQLLFLEAEDPEKDIQIYINSPGGSVTAGMAIYDTMQQISPDVVTICFGVAASMGAFLLSGGAKGKRLALPNSRIMIHQPLGGAQGQAVEIEIQAKEILFLKKTLNSLLAEHTGQPLEKINEDTERDYFLSPSEAVEYGLIDKVIKK</sequence>